<name>RBP2_PLAVB</name>
<organism>
    <name type="scientific">Plasmodium vivax (strain Belem)</name>
    <dbReference type="NCBI Taxonomy" id="31273"/>
    <lineage>
        <taxon>Eukaryota</taxon>
        <taxon>Sar</taxon>
        <taxon>Alveolata</taxon>
        <taxon>Apicomplexa</taxon>
        <taxon>Aconoidasida</taxon>
        <taxon>Haemosporida</taxon>
        <taxon>Plasmodiidae</taxon>
        <taxon>Plasmodium</taxon>
        <taxon>Plasmodium (Plasmodium)</taxon>
    </lineage>
</organism>
<accession>Q00799</accession>
<accession>Q9N2M3</accession>
<reference key="1">
    <citation type="journal article" date="2000" name="Mol. Biochem. Parasitol.">
        <title>Plasmodium vivax reticulocyte binding protein-2 (PvRBP-2) shares structural features with PvRBP-1 and the Plasmodium yoelii 235 kDa rhoptry protein family.</title>
        <authorList>
            <person name="Galinski M.R."/>
            <person name="Xu M."/>
            <person name="Barnwell J.W."/>
        </authorList>
    </citation>
    <scope>NUCLEOTIDE SEQUENCE [GENOMIC DNA]</scope>
    <scope>SEQUENCE REVISION TO 2438-2439</scope>
</reference>
<reference key="2">
    <citation type="journal article" date="1992" name="Cell">
        <title>A reticulocyte-binding protein complex of Plasmodium vivax merozoites.</title>
        <authorList>
            <person name="Galinski M.R."/>
            <person name="Medina C.C."/>
            <person name="Ingravallo P."/>
            <person name="Barnwell J.W."/>
        </authorList>
    </citation>
    <scope>NUCLEOTIDE SEQUENCE [GENOMIC DNA] OF 1189-2439</scope>
</reference>
<protein>
    <recommendedName>
        <fullName>Reticulocyte-binding protein 2</fullName>
    </recommendedName>
    <alternativeName>
        <fullName>PvRBP-2</fullName>
    </alternativeName>
</protein>
<evidence type="ECO:0000255" key="1"/>
<evidence type="ECO:0000256" key="2">
    <source>
        <dbReference type="SAM" id="MobiDB-lite"/>
    </source>
</evidence>
<evidence type="ECO:0000305" key="3"/>
<gene>
    <name type="primary">RBP-2</name>
    <name type="synonym">RBP2</name>
</gene>
<keyword id="KW-1003">Cell membrane</keyword>
<keyword id="KW-0461">Malaria</keyword>
<keyword id="KW-0472">Membrane</keyword>
<keyword id="KW-0675">Receptor</keyword>
<keyword id="KW-0677">Repeat</keyword>
<keyword id="KW-0732">Signal</keyword>
<keyword id="KW-0812">Transmembrane</keyword>
<keyword id="KW-1133">Transmembrane helix</keyword>
<feature type="signal peptide" evidence="1">
    <location>
        <begin position="1"/>
        <end position="21"/>
    </location>
</feature>
<feature type="chain" id="PRO_0000024577" description="Reticulocyte-binding protein 2">
    <location>
        <begin position="22"/>
        <end position="2867"/>
    </location>
</feature>
<feature type="topological domain" description="Extracellular" evidence="1">
    <location>
        <begin position="22"/>
        <end position="2805"/>
    </location>
</feature>
<feature type="transmembrane region" description="Helical" evidence="1">
    <location>
        <begin position="2806"/>
        <end position="2826"/>
    </location>
</feature>
<feature type="topological domain" description="Cytoplasmic" evidence="1">
    <location>
        <begin position="2827"/>
        <end position="2867"/>
    </location>
</feature>
<feature type="repeat" description="1">
    <location>
        <begin position="2758"/>
        <end position="2761"/>
    </location>
</feature>
<feature type="repeat" description="2">
    <location>
        <begin position="2762"/>
        <end position="2765"/>
    </location>
</feature>
<feature type="repeat" description="3">
    <location>
        <begin position="2766"/>
        <end position="2769"/>
    </location>
</feature>
<feature type="repeat" description="4">
    <location>
        <begin position="2770"/>
        <end position="2773"/>
    </location>
</feature>
<feature type="repeat" description="5">
    <location>
        <begin position="2774"/>
        <end position="2777"/>
    </location>
</feature>
<feature type="repeat" description="6">
    <location>
        <begin position="2778"/>
        <end position="2781"/>
    </location>
</feature>
<feature type="repeat" description="7">
    <location>
        <begin position="2782"/>
        <end position="2785"/>
    </location>
</feature>
<feature type="region of interest" description="Disordered" evidence="2">
    <location>
        <begin position="52"/>
        <end position="73"/>
    </location>
</feature>
<feature type="region of interest" description="Disordered" evidence="2">
    <location>
        <begin position="2650"/>
        <end position="2682"/>
    </location>
</feature>
<feature type="region of interest" description="Disordered" evidence="2">
    <location>
        <begin position="2712"/>
        <end position="2799"/>
    </location>
</feature>
<feature type="region of interest" description="7 X 4 AA tandem repeats of H-D-D-T">
    <location>
        <begin position="2758"/>
        <end position="2785"/>
    </location>
</feature>
<feature type="compositionally biased region" description="Low complexity" evidence="2">
    <location>
        <begin position="61"/>
        <end position="73"/>
    </location>
</feature>
<feature type="compositionally biased region" description="Basic and acidic residues" evidence="2">
    <location>
        <begin position="2659"/>
        <end position="2674"/>
    </location>
</feature>
<feature type="compositionally biased region" description="Polar residues" evidence="2">
    <location>
        <begin position="2725"/>
        <end position="2736"/>
    </location>
</feature>
<feature type="compositionally biased region" description="Acidic residues" evidence="2">
    <location>
        <begin position="2743"/>
        <end position="2754"/>
    </location>
</feature>
<feature type="compositionally biased region" description="Basic and acidic residues" evidence="2">
    <location>
        <begin position="2755"/>
        <end position="2799"/>
    </location>
</feature>
<comment type="function">
    <text>Involved in reticulocyte adhesion. Specifically binds to human reticulocyte cells.</text>
</comment>
<comment type="subcellular location">
    <subcellularLocation>
        <location evidence="3">Cell membrane</location>
        <topology evidence="3">Single-pass type I membrane protein</topology>
    </subcellularLocation>
</comment>
<sequence length="2867" mass="331436">MEKNVLWVIFYNFLVILLASCNDSNRSKSNSLKSESKSLPTYANLMRNGQDKYNNAKTEDNIGNQINNDNNHNGYNDNRINSEYPKTSHLQHSPSLVHLNDHKFTTKPSRHSYVQRNSIYKRNTNNNMENTNNELHVVPNFFIQEKKAAPQKPSVQNTPTATQIVYNNLDYLNAFDDTNNIISAFKPHHPIIYYFKQLEHFANSYYDLRNKIKDYFALPMKQASDVVEKNVKDCLQNINESRILMTQLENPQNYNDISDKYDEKVKEYKKKIEDMQICLKDSYIKNFKAIMSANLKMNLALNGIYIHWWYLTCSTKTYDDIVKEYAIEINDFDEKKSISFMDNMKKIHKSAIDTLKKMKAELNTSLDSKRTEFIIGEIGHMIEKFNLHLTKIRYASAFIKSIPLQKVESDIYRVELKTLFYVAAKHYADFKFSLEHLKMFENLSKSKEKMLYSTFEKLEGDLLNKINTLMGSEQSTSDLTSIIADSEKIIKSAESLINSSSEEIAKYALDSNEKINEIKKNYDQNILKVREFINKSNGLITSVKGTSQLSESDKQQIETKIEEIKKKKKDILERGKEFINIMNEIKKKKKSNSSNSSTNSKEFTDKLKELETEFEGLNKTVKGYLQEIEDIKVKENEDRSLKNQIEQHLKYTSDNRDNVKTLISKNDEIQKYIEKIEKLINDAPSGKDKFTTEKTNLQNKVKKIIDEFHKEDLQLLLNSLSKFYEEHQKLYNEASTIEKIKDLHQKTKEEYEKLEKMKFSNFGQILDKLNTELDNLKTLEKNIVEEQTNYINKVMSDSLTNLTAEVDNLRSALDGYRADETELKTYKNRINERKEKFLSTLKEQEDDIPDGKNIYEEYNNHKNVMVNKEHKISSDINQCNENIIKAEKNLETFNTLVQTLDAHTGKKDQKVHDLLQKFKTNLEKLNLNELESGFKSLNGSASTTNKQIENIRKNIDTIKSLNFAKNSSESSKLSLENIIKNKADLIKKLDQHTQEIEKHTFIENEEMSPLLSVIKKEKNRVESDMSEELIKQLNTKINAILEYYNKSKDRFNGDDETNLEELDDFKKQCQDAQQEIKKLTTNYNVLDNGINVIIKEQHEKVIILSENHITEKDKKINEKIQQNVNSLNEMKTKLGLLKINEDIKNSRDTTIKSKIQEFEKKVQTIFGSIDVANKKIDAIKKEHDVNKDEFDKEKVKDTSFDEKKKSIEKAYEKMGNTLKELEKMDDEKNIEKEVEEAQIQYKRIFIDHDVNLMNDEVEKSKIVMEKIELYKKEIDEIKQKTNEYKQGDTSNFYYTEQYNSATQSKAKIEQFINIATTKKGTSDTSQDINELESIKEEVHKNLQLVKQESNSMEEMRKQILSMKDLLILNNSETIAKEISNNTQNALGFRENAKTKLNKTDELLQRVAAMIEEAKAHKNNIDIALEDAQIDTEVSKIEQINREIMNKKDEIKSYLSEIKEYKDKCTTEISNSKRGKDKIEFLEKFKPNEESNSNKVNINEINENIRNSEQYLKDIEDAEKQASTKVELFHKHETTISNIFKESEILGVETKSQKKINKAEDIMKEIERHNSEIQTQVKGFQENLNKLNEPHNYDNAEDELNNDKSTNAKVLIETNLESVKHNLSEITNIKQGGEKIYSKAKDIMQKIKATSENTAEKTLEKVKDDQSNYVNYLNQITTERNLIVTEKNRLNGIDSTITNIEGALKESKGNYEIGFLEKLEEIGKNRKLKVDITKKSINSTVGNFSSLFNNFDLNQYDFNKNINDYENKMGEIYNEFEGSLNKISENLRNASENTSDYNSAKTLRLEAQKEKVNLLNKEEEANKYLRDVKKVESFRFIFNMKESLDKINEMIKKEQLTVNEGHGNVKQLVENIKELVDENNLSDILKQATGKNEEIQKITHSTLKNKAKTILGHVDTSAKYVGIKITPELALTELLGDAKLKTAQELKFESKNNVVLETENMSKNTNELDVHKNIQDAYKVALEILAHSDEIDTKQKDSSKLIEMGNQIYLKVVLINQYKNKISSIKSKEEAVSVKIGNVSKKHSELSKITCSDKSYDNIIALEKQTELQNLRNSFTQEKTNTNSDSKLEKIKTDFESLKNALKTLEGEVNALKASSDNHEHVQSKSEPVNPALSEIEKEETDIDSLNTALDELLKKGRTCEVSRYKLIKDTVTKEISDDTELINTIEKNVKAYLAYIKKNYEDTVQDVLTLNEHFNTKQVSNHEPTNFDKSNKSSEELTKAVTDSKTIISKLKGVIIEVNENTEMNTIESSAKEIEALYNELKNKKTSLNEIYQTSNEVKLQEMKSNADKYIDVSKIFNTVLDTQKSNIVTNQHSINNVKDKLKGKLQELIDADSSFTLESIKKFNEIYSHIKTNIGELEQLQQTNKSEHDNVAKHKEKIVHLINRVESLKGDVKNHDDDQYMKKLNASLLNDNIKNTNSINISDEELKKLLKKVEENDQLCKNNNTQNFISDIMKRVEDLNRRFTENLPEKEKLHQIENNYNEISSIFSEINLQDVDEFVAKIHKQIDAEKASVNNVREAEKIRTAIQNVTSYDTEIISRLSEMNNVLERITTRKTKMDQLLKSLSPDNTSLNLNARTHVRKSEDIIKQLNSHIGEITELNTYAHEVMTYLENELNKLLKQLEIERAKLETKTSPSGMKAKEEKVPPKETENRAQDNLASVPQKTLEDNTQQMPENSVQDNLASVPQKTLEDNTHQMPENRVQEDSISAPQEQVEYSTLAVPENDETTEEESEHDDAHDDTHDDTHDDTHDDTHDDTHDDTHDDTHDESQTGRDSTAKEAIGKTRLAGAVIIAMSVLSGFIIIVFKDKDEEEKDHNEHGYNEAFGEHDEYNMHDKEEVIEVCFNEED</sequence>
<proteinExistence type="inferred from homology"/>
<dbReference type="EMBL" id="AF184623">
    <property type="protein sequence ID" value="AAF76525.1"/>
    <property type="molecule type" value="Genomic_DNA"/>
</dbReference>
<dbReference type="SMR" id="Q00799"/>
<dbReference type="GO" id="GO:0016020">
    <property type="term" value="C:membrane"/>
    <property type="evidence" value="ECO:0000314"/>
    <property type="project" value="UniProtKB"/>
</dbReference>
<dbReference type="GO" id="GO:0005886">
    <property type="term" value="C:plasma membrane"/>
    <property type="evidence" value="ECO:0007669"/>
    <property type="project" value="UniProtKB-SubCell"/>
</dbReference>
<dbReference type="GO" id="GO:0098609">
    <property type="term" value="P:cell-cell adhesion"/>
    <property type="evidence" value="ECO:0000314"/>
    <property type="project" value="UniProtKB"/>
</dbReference>